<reference key="1">
    <citation type="journal article" date="2006" name="Proc. Natl. Acad. Sci. U.S.A.">
        <title>The partitioned Rhizobium etli genome: genetic and metabolic redundancy in seven interacting replicons.</title>
        <authorList>
            <person name="Gonzalez V."/>
            <person name="Santamaria R.I."/>
            <person name="Bustos P."/>
            <person name="Hernandez-Gonzalez I."/>
            <person name="Medrano-Soto A."/>
            <person name="Moreno-Hagelsieb G."/>
            <person name="Janga S.C."/>
            <person name="Ramirez M.A."/>
            <person name="Jimenez-Jacinto V."/>
            <person name="Collado-Vides J."/>
            <person name="Davila G."/>
        </authorList>
    </citation>
    <scope>NUCLEOTIDE SEQUENCE [LARGE SCALE GENOMIC DNA]</scope>
    <source>
        <strain>ATCC 51251 / DSM 11541 / JCM 21823 / NBRC 15573 / CFN 42</strain>
    </source>
</reference>
<gene>
    <name evidence="1" type="primary">lpxA</name>
    <name type="ordered locus">RHE_CH01923</name>
</gene>
<name>LPXA_RHIEC</name>
<comment type="function">
    <text evidence="1">Involved in the biosynthesis of lipid A, a phosphorylated glycolipid that anchors the lipopolysaccharide to the outer membrane of the cell.</text>
</comment>
<comment type="catalytic activity">
    <reaction evidence="1">
        <text>a (3R)-hydroxyacyl-[ACP] + UDP-N-acetyl-alpha-D-glucosamine = a UDP-3-O-[(3R)-3-hydroxyacyl]-N-acetyl-alpha-D-glucosamine + holo-[ACP]</text>
        <dbReference type="Rhea" id="RHEA:67812"/>
        <dbReference type="Rhea" id="RHEA-COMP:9685"/>
        <dbReference type="Rhea" id="RHEA-COMP:9945"/>
        <dbReference type="ChEBI" id="CHEBI:57705"/>
        <dbReference type="ChEBI" id="CHEBI:64479"/>
        <dbReference type="ChEBI" id="CHEBI:78827"/>
        <dbReference type="ChEBI" id="CHEBI:173225"/>
        <dbReference type="EC" id="2.3.1.129"/>
    </reaction>
</comment>
<comment type="pathway">
    <text evidence="1">Glycolipid biosynthesis; lipid IV(A) biosynthesis; lipid IV(A) from (3R)-3-hydroxytetradecanoyl-[acyl-carrier-protein] and UDP-N-acetyl-alpha-D-glucosamine: step 1/6.</text>
</comment>
<comment type="subunit">
    <text evidence="1">Homotrimer.</text>
</comment>
<comment type="subcellular location">
    <subcellularLocation>
        <location evidence="1">Cytoplasm</location>
    </subcellularLocation>
</comment>
<comment type="similarity">
    <text evidence="1">Belongs to the transferase hexapeptide repeat family. LpxA subfamily.</text>
</comment>
<feature type="chain" id="PRO_1000013174" description="Acyl-[acyl-carrier-protein]--UDP-N-acetylglucosamine O-acyltransferase">
    <location>
        <begin position="1"/>
        <end position="272"/>
    </location>
</feature>
<sequence>MSNIAESARIHPMAVVEDGATIGEGVKIGPFCHVGPHVVLHANVELLAHAVVTGRTVVGKGTRIFPMAVVGGDPQSVHHGGEDTTLTVGANCTIREGVTMNTGTADFGGRTIVGDNNLFLANSHVAHDCRVGNHVIMSNNVMLAGHVVIEDRVILGGGSAVHQFTRVGRHAFVGGLSAVSYDVIPYGMLNGNPGLLGGLNVVGMTRAGIDRAVIHRVRRAYKAIFEGTGSVRENAAAIRDEYADCEQVVQILDFIAADSDRALSSPTRGQKG</sequence>
<accession>Q2K8X7</accession>
<organism>
    <name type="scientific">Rhizobium etli (strain ATCC 51251 / DSM 11541 / JCM 21823 / NBRC 15573 / CFN 42)</name>
    <dbReference type="NCBI Taxonomy" id="347834"/>
    <lineage>
        <taxon>Bacteria</taxon>
        <taxon>Pseudomonadati</taxon>
        <taxon>Pseudomonadota</taxon>
        <taxon>Alphaproteobacteria</taxon>
        <taxon>Hyphomicrobiales</taxon>
        <taxon>Rhizobiaceae</taxon>
        <taxon>Rhizobium/Agrobacterium group</taxon>
        <taxon>Rhizobium</taxon>
    </lineage>
</organism>
<evidence type="ECO:0000255" key="1">
    <source>
        <dbReference type="HAMAP-Rule" id="MF_00387"/>
    </source>
</evidence>
<protein>
    <recommendedName>
        <fullName evidence="1">Acyl-[acyl-carrier-protein]--UDP-N-acetylglucosamine O-acyltransferase</fullName>
        <shortName evidence="1">UDP-N-acetylglucosamine acyltransferase</shortName>
        <ecNumber evidence="1">2.3.1.129</ecNumber>
    </recommendedName>
</protein>
<proteinExistence type="inferred from homology"/>
<dbReference type="EC" id="2.3.1.129" evidence="1"/>
<dbReference type="EMBL" id="CP000133">
    <property type="protein sequence ID" value="ABC90709.1"/>
    <property type="molecule type" value="Genomic_DNA"/>
</dbReference>
<dbReference type="RefSeq" id="WP_011425201.1">
    <property type="nucleotide sequence ID" value="NC_007761.1"/>
</dbReference>
<dbReference type="SMR" id="Q2K8X7"/>
<dbReference type="KEGG" id="ret:RHE_CH01923"/>
<dbReference type="eggNOG" id="COG1043">
    <property type="taxonomic scope" value="Bacteria"/>
</dbReference>
<dbReference type="HOGENOM" id="CLU_061249_0_0_5"/>
<dbReference type="OrthoDB" id="9807278at2"/>
<dbReference type="UniPathway" id="UPA00359">
    <property type="reaction ID" value="UER00477"/>
</dbReference>
<dbReference type="Proteomes" id="UP000001936">
    <property type="component" value="Chromosome"/>
</dbReference>
<dbReference type="GO" id="GO:0005737">
    <property type="term" value="C:cytoplasm"/>
    <property type="evidence" value="ECO:0007669"/>
    <property type="project" value="UniProtKB-SubCell"/>
</dbReference>
<dbReference type="GO" id="GO:0016020">
    <property type="term" value="C:membrane"/>
    <property type="evidence" value="ECO:0007669"/>
    <property type="project" value="GOC"/>
</dbReference>
<dbReference type="GO" id="GO:0008780">
    <property type="term" value="F:acyl-[acyl-carrier-protein]-UDP-N-acetylglucosamine O-acyltransferase activity"/>
    <property type="evidence" value="ECO:0007669"/>
    <property type="project" value="UniProtKB-UniRule"/>
</dbReference>
<dbReference type="GO" id="GO:0009245">
    <property type="term" value="P:lipid A biosynthetic process"/>
    <property type="evidence" value="ECO:0007669"/>
    <property type="project" value="UniProtKB-UniRule"/>
</dbReference>
<dbReference type="CDD" id="cd03351">
    <property type="entry name" value="LbH_UDP-GlcNAc_AT"/>
    <property type="match status" value="1"/>
</dbReference>
<dbReference type="Gene3D" id="2.160.10.10">
    <property type="entry name" value="Hexapeptide repeat proteins"/>
    <property type="match status" value="1"/>
</dbReference>
<dbReference type="Gene3D" id="1.20.1180.10">
    <property type="entry name" value="Udp N-acetylglucosamine O-acyltransferase, C-terminal domain"/>
    <property type="match status" value="1"/>
</dbReference>
<dbReference type="HAMAP" id="MF_00387">
    <property type="entry name" value="LpxA"/>
    <property type="match status" value="1"/>
</dbReference>
<dbReference type="InterPro" id="IPR029098">
    <property type="entry name" value="Acetyltransf_C"/>
</dbReference>
<dbReference type="InterPro" id="IPR037157">
    <property type="entry name" value="Acetyltransf_C_sf"/>
</dbReference>
<dbReference type="InterPro" id="IPR001451">
    <property type="entry name" value="Hexapep"/>
</dbReference>
<dbReference type="InterPro" id="IPR010137">
    <property type="entry name" value="Lipid_A_LpxA"/>
</dbReference>
<dbReference type="InterPro" id="IPR011004">
    <property type="entry name" value="Trimer_LpxA-like_sf"/>
</dbReference>
<dbReference type="NCBIfam" id="TIGR01852">
    <property type="entry name" value="lipid_A_lpxA"/>
    <property type="match status" value="1"/>
</dbReference>
<dbReference type="NCBIfam" id="NF003657">
    <property type="entry name" value="PRK05289.1"/>
    <property type="match status" value="1"/>
</dbReference>
<dbReference type="PANTHER" id="PTHR43480">
    <property type="entry name" value="ACYL-[ACYL-CARRIER-PROTEIN]--UDP-N-ACETYLGLUCOSAMINE O-ACYLTRANSFERASE"/>
    <property type="match status" value="1"/>
</dbReference>
<dbReference type="PANTHER" id="PTHR43480:SF1">
    <property type="entry name" value="ACYL-[ACYL-CARRIER-PROTEIN]--UDP-N-ACETYLGLUCOSAMINE O-ACYLTRANSFERASE, MITOCHONDRIAL-RELATED"/>
    <property type="match status" value="1"/>
</dbReference>
<dbReference type="Pfam" id="PF13720">
    <property type="entry name" value="Acetyltransf_11"/>
    <property type="match status" value="1"/>
</dbReference>
<dbReference type="Pfam" id="PF00132">
    <property type="entry name" value="Hexapep"/>
    <property type="match status" value="2"/>
</dbReference>
<dbReference type="PIRSF" id="PIRSF000456">
    <property type="entry name" value="UDP-GlcNAc_acltr"/>
    <property type="match status" value="1"/>
</dbReference>
<dbReference type="SUPFAM" id="SSF51161">
    <property type="entry name" value="Trimeric LpxA-like enzymes"/>
    <property type="match status" value="1"/>
</dbReference>
<keyword id="KW-0012">Acyltransferase</keyword>
<keyword id="KW-0963">Cytoplasm</keyword>
<keyword id="KW-0441">Lipid A biosynthesis</keyword>
<keyword id="KW-0444">Lipid biosynthesis</keyword>
<keyword id="KW-0443">Lipid metabolism</keyword>
<keyword id="KW-1185">Reference proteome</keyword>
<keyword id="KW-0677">Repeat</keyword>
<keyword id="KW-0808">Transferase</keyword>